<protein>
    <recommendedName>
        <fullName evidence="1">Divalent metal cation transporter MntH</fullName>
    </recommendedName>
</protein>
<keyword id="KW-0997">Cell inner membrane</keyword>
<keyword id="KW-1003">Cell membrane</keyword>
<keyword id="KW-0406">Ion transport</keyword>
<keyword id="KW-0472">Membrane</keyword>
<keyword id="KW-0769">Symport</keyword>
<keyword id="KW-0812">Transmembrane</keyword>
<keyword id="KW-1133">Transmembrane helix</keyword>
<keyword id="KW-0813">Transport</keyword>
<dbReference type="EMBL" id="CP000720">
    <property type="protein sequence ID" value="ABS48538.1"/>
    <property type="molecule type" value="Genomic_DNA"/>
</dbReference>
<dbReference type="RefSeq" id="WP_002211621.1">
    <property type="nucleotide sequence ID" value="NC_009708.1"/>
</dbReference>
<dbReference type="SMR" id="A7FGC8"/>
<dbReference type="KEGG" id="ypi:YpsIP31758_1327"/>
<dbReference type="HOGENOM" id="CLU_020088_2_0_6"/>
<dbReference type="Proteomes" id="UP000002412">
    <property type="component" value="Chromosome"/>
</dbReference>
<dbReference type="GO" id="GO:0005886">
    <property type="term" value="C:plasma membrane"/>
    <property type="evidence" value="ECO:0007669"/>
    <property type="project" value="UniProtKB-SubCell"/>
</dbReference>
<dbReference type="GO" id="GO:0015086">
    <property type="term" value="F:cadmium ion transmembrane transporter activity"/>
    <property type="evidence" value="ECO:0007669"/>
    <property type="project" value="TreeGrafter"/>
</dbReference>
<dbReference type="GO" id="GO:0005384">
    <property type="term" value="F:manganese ion transmembrane transporter activity"/>
    <property type="evidence" value="ECO:0007669"/>
    <property type="project" value="TreeGrafter"/>
</dbReference>
<dbReference type="GO" id="GO:0046872">
    <property type="term" value="F:metal ion binding"/>
    <property type="evidence" value="ECO:0007669"/>
    <property type="project" value="UniProtKB-UniRule"/>
</dbReference>
<dbReference type="GO" id="GO:0015293">
    <property type="term" value="F:symporter activity"/>
    <property type="evidence" value="ECO:0007669"/>
    <property type="project" value="UniProtKB-UniRule"/>
</dbReference>
<dbReference type="GO" id="GO:0034755">
    <property type="term" value="P:iron ion transmembrane transport"/>
    <property type="evidence" value="ECO:0007669"/>
    <property type="project" value="TreeGrafter"/>
</dbReference>
<dbReference type="HAMAP" id="MF_00221">
    <property type="entry name" value="NRAMP"/>
    <property type="match status" value="1"/>
</dbReference>
<dbReference type="InterPro" id="IPR001046">
    <property type="entry name" value="NRAMP_fam"/>
</dbReference>
<dbReference type="NCBIfam" id="TIGR01197">
    <property type="entry name" value="nramp"/>
    <property type="match status" value="1"/>
</dbReference>
<dbReference type="NCBIfam" id="NF037982">
    <property type="entry name" value="Nramp_1"/>
    <property type="match status" value="1"/>
</dbReference>
<dbReference type="NCBIfam" id="NF001923">
    <property type="entry name" value="PRK00701.1"/>
    <property type="match status" value="1"/>
</dbReference>
<dbReference type="PANTHER" id="PTHR11706:SF33">
    <property type="entry name" value="NATURAL RESISTANCE-ASSOCIATED MACROPHAGE PROTEIN 2"/>
    <property type="match status" value="1"/>
</dbReference>
<dbReference type="PANTHER" id="PTHR11706">
    <property type="entry name" value="SOLUTE CARRIER PROTEIN FAMILY 11 MEMBER"/>
    <property type="match status" value="1"/>
</dbReference>
<dbReference type="Pfam" id="PF01566">
    <property type="entry name" value="Nramp"/>
    <property type="match status" value="1"/>
</dbReference>
<dbReference type="PRINTS" id="PR00447">
    <property type="entry name" value="NATRESASSCMP"/>
</dbReference>
<evidence type="ECO:0000255" key="1">
    <source>
        <dbReference type="HAMAP-Rule" id="MF_00221"/>
    </source>
</evidence>
<proteinExistence type="inferred from homology"/>
<sequence length="409" mass="43742">MLNGRAVDTSRRPLRKIKLSLMGPAFIAAIAYIDPGNFATNIQAGATFGYTLLWVVVWANVMAMLVQLLSAKLGIATGKNLAEHIRDRFPRPVVWAYWVQAEIIVMATDLAEFIGAAIGFKLLFGVTLLQGAVLTGIATFLILMLQNRGQKPLELVIGGLLLFVAAAYIVELIFSQPDIAALGRGMLIPNLPDGNAVFLAAGVLGATIMPHVIYLHSALTQTGGEESKTERYASTKFDVAIAMTIAGFVNLAMMATAAAAFHFNGYENIAEIEEAYITLQPLLGNAAATVFGLSLIAAGLSSTVVGTLAGQVVMQGFVRFYIPMWVRRIVTMLPSFIVILAGMDATQILVMSQVLLSFGIALALVPLLVFTGNKELMGELVDTKTTQILGKLVVLIVVGLNAYLLISLL</sequence>
<feature type="chain" id="PRO_1000058657" description="Divalent metal cation transporter MntH">
    <location>
        <begin position="1"/>
        <end position="409"/>
    </location>
</feature>
<feature type="transmembrane region" description="Helical" evidence="1">
    <location>
        <begin position="19"/>
        <end position="39"/>
    </location>
</feature>
<feature type="transmembrane region" description="Helical" evidence="1">
    <location>
        <begin position="46"/>
        <end position="66"/>
    </location>
</feature>
<feature type="transmembrane region" description="Helical" evidence="1">
    <location>
        <begin position="98"/>
        <end position="118"/>
    </location>
</feature>
<feature type="transmembrane region" description="Helical" evidence="1">
    <location>
        <begin position="122"/>
        <end position="142"/>
    </location>
</feature>
<feature type="transmembrane region" description="Helical" evidence="1">
    <location>
        <begin position="155"/>
        <end position="175"/>
    </location>
</feature>
<feature type="transmembrane region" description="Helical" evidence="1">
    <location>
        <begin position="196"/>
        <end position="216"/>
    </location>
</feature>
<feature type="transmembrane region" description="Helical" evidence="1">
    <location>
        <begin position="241"/>
        <end position="261"/>
    </location>
</feature>
<feature type="transmembrane region" description="Helical" evidence="1">
    <location>
        <begin position="290"/>
        <end position="310"/>
    </location>
</feature>
<feature type="transmembrane region" description="Helical" evidence="1">
    <location>
        <begin position="320"/>
        <end position="340"/>
    </location>
</feature>
<feature type="transmembrane region" description="Helical" evidence="1">
    <location>
        <begin position="348"/>
        <end position="368"/>
    </location>
</feature>
<feature type="transmembrane region" description="Helical" evidence="1">
    <location>
        <begin position="388"/>
        <end position="408"/>
    </location>
</feature>
<reference key="1">
    <citation type="journal article" date="2007" name="PLoS Genet.">
        <title>The complete genome sequence of Yersinia pseudotuberculosis IP31758, the causative agent of Far East scarlet-like fever.</title>
        <authorList>
            <person name="Eppinger M."/>
            <person name="Rosovitz M.J."/>
            <person name="Fricke W.F."/>
            <person name="Rasko D.A."/>
            <person name="Kokorina G."/>
            <person name="Fayolle C."/>
            <person name="Lindler L.E."/>
            <person name="Carniel E."/>
            <person name="Ravel J."/>
        </authorList>
    </citation>
    <scope>NUCLEOTIDE SEQUENCE [LARGE SCALE GENOMIC DNA]</scope>
    <source>
        <strain>IP 31758</strain>
    </source>
</reference>
<organism>
    <name type="scientific">Yersinia pseudotuberculosis serotype O:1b (strain IP 31758)</name>
    <dbReference type="NCBI Taxonomy" id="349747"/>
    <lineage>
        <taxon>Bacteria</taxon>
        <taxon>Pseudomonadati</taxon>
        <taxon>Pseudomonadota</taxon>
        <taxon>Gammaproteobacteria</taxon>
        <taxon>Enterobacterales</taxon>
        <taxon>Yersiniaceae</taxon>
        <taxon>Yersinia</taxon>
    </lineage>
</organism>
<accession>A7FGC8</accession>
<gene>
    <name evidence="1" type="primary">mntH</name>
    <name type="ordered locus">YpsIP31758_1327</name>
</gene>
<comment type="function">
    <text evidence="1">H(+)-stimulated, divalent metal cation uptake system.</text>
</comment>
<comment type="subcellular location">
    <subcellularLocation>
        <location evidence="1">Cell inner membrane</location>
        <topology evidence="1">Multi-pass membrane protein</topology>
    </subcellularLocation>
</comment>
<comment type="similarity">
    <text evidence="1">Belongs to the NRAMP family.</text>
</comment>
<name>MNTH_YERP3</name>